<protein>
    <recommendedName>
        <fullName evidence="1">Pantothenate kinase</fullName>
        <ecNumber evidence="1">2.7.1.33</ecNumber>
    </recommendedName>
    <alternativeName>
        <fullName evidence="1">Pantothenic acid kinase</fullName>
    </alternativeName>
</protein>
<accession>Q6ND01</accession>
<evidence type="ECO:0000255" key="1">
    <source>
        <dbReference type="HAMAP-Rule" id="MF_00215"/>
    </source>
</evidence>
<dbReference type="EC" id="2.7.1.33" evidence="1"/>
<dbReference type="EMBL" id="BX572593">
    <property type="protein sequence ID" value="CAE25759.1"/>
    <property type="molecule type" value="Genomic_DNA"/>
</dbReference>
<dbReference type="RefSeq" id="WP_011155883.1">
    <property type="nucleotide sequence ID" value="NZ_CP116810.1"/>
</dbReference>
<dbReference type="SMR" id="Q6ND01"/>
<dbReference type="STRING" id="258594.RPA0315"/>
<dbReference type="GeneID" id="66891325"/>
<dbReference type="eggNOG" id="COG1072">
    <property type="taxonomic scope" value="Bacteria"/>
</dbReference>
<dbReference type="HOGENOM" id="CLU_053818_1_1_5"/>
<dbReference type="PhylomeDB" id="Q6ND01"/>
<dbReference type="UniPathway" id="UPA00241">
    <property type="reaction ID" value="UER00352"/>
</dbReference>
<dbReference type="GO" id="GO:0005737">
    <property type="term" value="C:cytoplasm"/>
    <property type="evidence" value="ECO:0007669"/>
    <property type="project" value="UniProtKB-SubCell"/>
</dbReference>
<dbReference type="GO" id="GO:0005524">
    <property type="term" value="F:ATP binding"/>
    <property type="evidence" value="ECO:0007669"/>
    <property type="project" value="UniProtKB-UniRule"/>
</dbReference>
<dbReference type="GO" id="GO:0004594">
    <property type="term" value="F:pantothenate kinase activity"/>
    <property type="evidence" value="ECO:0007669"/>
    <property type="project" value="UniProtKB-UniRule"/>
</dbReference>
<dbReference type="GO" id="GO:0015937">
    <property type="term" value="P:coenzyme A biosynthetic process"/>
    <property type="evidence" value="ECO:0007669"/>
    <property type="project" value="UniProtKB-UniRule"/>
</dbReference>
<dbReference type="CDD" id="cd02025">
    <property type="entry name" value="PanK"/>
    <property type="match status" value="1"/>
</dbReference>
<dbReference type="Gene3D" id="3.40.50.300">
    <property type="entry name" value="P-loop containing nucleotide triphosphate hydrolases"/>
    <property type="match status" value="1"/>
</dbReference>
<dbReference type="HAMAP" id="MF_00215">
    <property type="entry name" value="Pantothen_kinase_1"/>
    <property type="match status" value="1"/>
</dbReference>
<dbReference type="InterPro" id="IPR027417">
    <property type="entry name" value="P-loop_NTPase"/>
</dbReference>
<dbReference type="InterPro" id="IPR004566">
    <property type="entry name" value="PanK"/>
</dbReference>
<dbReference type="InterPro" id="IPR006083">
    <property type="entry name" value="PRK/URK"/>
</dbReference>
<dbReference type="NCBIfam" id="TIGR00554">
    <property type="entry name" value="panK_bact"/>
    <property type="match status" value="1"/>
</dbReference>
<dbReference type="PANTHER" id="PTHR10285">
    <property type="entry name" value="URIDINE KINASE"/>
    <property type="match status" value="1"/>
</dbReference>
<dbReference type="Pfam" id="PF00485">
    <property type="entry name" value="PRK"/>
    <property type="match status" value="1"/>
</dbReference>
<dbReference type="PIRSF" id="PIRSF000545">
    <property type="entry name" value="Pantothenate_kin"/>
    <property type="match status" value="1"/>
</dbReference>
<dbReference type="SUPFAM" id="SSF52540">
    <property type="entry name" value="P-loop containing nucleoside triphosphate hydrolases"/>
    <property type="match status" value="1"/>
</dbReference>
<name>COAA_RHOPA</name>
<gene>
    <name evidence="1" type="primary">coaA</name>
    <name type="ordered locus">RPA0315</name>
</gene>
<reference key="1">
    <citation type="journal article" date="2004" name="Nat. Biotechnol.">
        <title>Complete genome sequence of the metabolically versatile photosynthetic bacterium Rhodopseudomonas palustris.</title>
        <authorList>
            <person name="Larimer F.W."/>
            <person name="Chain P."/>
            <person name="Hauser L."/>
            <person name="Lamerdin J.E."/>
            <person name="Malfatti S."/>
            <person name="Do L."/>
            <person name="Land M.L."/>
            <person name="Pelletier D.A."/>
            <person name="Beatty J.T."/>
            <person name="Lang A.S."/>
            <person name="Tabita F.R."/>
            <person name="Gibson J.L."/>
            <person name="Hanson T.E."/>
            <person name="Bobst C."/>
            <person name="Torres y Torres J.L."/>
            <person name="Peres C."/>
            <person name="Harrison F.H."/>
            <person name="Gibson J."/>
            <person name="Harwood C.S."/>
        </authorList>
    </citation>
    <scope>NUCLEOTIDE SEQUENCE [LARGE SCALE GENOMIC DNA]</scope>
    <source>
        <strain>ATCC BAA-98 / CGA009</strain>
    </source>
</reference>
<feature type="chain" id="PRO_1000043243" description="Pantothenate kinase">
    <location>
        <begin position="1"/>
        <end position="318"/>
    </location>
</feature>
<feature type="binding site" evidence="1">
    <location>
        <begin position="96"/>
        <end position="103"/>
    </location>
    <ligand>
        <name>ATP</name>
        <dbReference type="ChEBI" id="CHEBI:30616"/>
    </ligand>
</feature>
<keyword id="KW-0067">ATP-binding</keyword>
<keyword id="KW-0173">Coenzyme A biosynthesis</keyword>
<keyword id="KW-0963">Cytoplasm</keyword>
<keyword id="KW-0418">Kinase</keyword>
<keyword id="KW-0547">Nucleotide-binding</keyword>
<keyword id="KW-0808">Transferase</keyword>
<comment type="catalytic activity">
    <reaction evidence="1">
        <text>(R)-pantothenate + ATP = (R)-4'-phosphopantothenate + ADP + H(+)</text>
        <dbReference type="Rhea" id="RHEA:16373"/>
        <dbReference type="ChEBI" id="CHEBI:10986"/>
        <dbReference type="ChEBI" id="CHEBI:15378"/>
        <dbReference type="ChEBI" id="CHEBI:29032"/>
        <dbReference type="ChEBI" id="CHEBI:30616"/>
        <dbReference type="ChEBI" id="CHEBI:456216"/>
        <dbReference type="EC" id="2.7.1.33"/>
    </reaction>
</comment>
<comment type="pathway">
    <text evidence="1">Cofactor biosynthesis; coenzyme A biosynthesis; CoA from (R)-pantothenate: step 1/5.</text>
</comment>
<comment type="subcellular location">
    <subcellularLocation>
        <location evidence="1">Cytoplasm</location>
    </subcellularLocation>
</comment>
<comment type="similarity">
    <text evidence="1">Belongs to the prokaryotic pantothenate kinase family.</text>
</comment>
<proteinExistence type="inferred from homology"/>
<organism>
    <name type="scientific">Rhodopseudomonas palustris (strain ATCC BAA-98 / CGA009)</name>
    <dbReference type="NCBI Taxonomy" id="258594"/>
    <lineage>
        <taxon>Bacteria</taxon>
        <taxon>Pseudomonadati</taxon>
        <taxon>Pseudomonadota</taxon>
        <taxon>Alphaproteobacteria</taxon>
        <taxon>Hyphomicrobiales</taxon>
        <taxon>Nitrobacteraceae</taxon>
        <taxon>Rhodopseudomonas</taxon>
    </lineage>
</organism>
<sequence>MDARSDLHHYNPYRVFSRAEWASMREDTPMTLDAAEVAALRSMHDRLDLSEVEEIYLPMSRLLSIHVAAMQQLYYAQRRFLGVVERKMPFIIGVAGSVAVGKSTTARVLQALLARWSPRPTVDLVTTDGFLHPNAVLERAGLMQKKGFPESYDLPALLGFLSDIKSGRRKVKAPIYSHLTYDIVPNKFTVIDRPDILIVEGVNVLQTGRLPRDGKAVPVVSDFFDFSVYLDADEPVLRDWYVRRFLALRDTAFHDPRSYFHRYAVLSDEEATATAIAIWERTNLANLEDNILPTRPRATLILKKGADHVVDSVALRRL</sequence>